<evidence type="ECO:0000250" key="1">
    <source>
        <dbReference type="UniProtKB" id="Q8TAF3"/>
    </source>
</evidence>
<evidence type="ECO:0000256" key="2">
    <source>
        <dbReference type="SAM" id="MobiDB-lite"/>
    </source>
</evidence>
<evidence type="ECO:0000305" key="3"/>
<name>WDR48_DANRE</name>
<sequence length="677" mass="76230">MATLHRQNAAGRRKVQVSYVIRDEVEKYNRNGVNALQLDPALNRLFTAGRDSIIRIWSVNQHKQDPYIASMEHHTDWVNDIILCCNGKTLISASSDTTVKVWNAHKGFCMSTLRTHKDYVKALAYAKDKELVASAGLDRQIFLWDVNTLTALTASNNTVTTSSLSGNKDSIYSLAMNQTGTVIISGSTEKVLRVWDPRTCAKLMKLKGHTDNVKSLLLNRDGTQCLSGSSDGTIRLWSLGQQRCIATYRVHDEGVWALQVNEAFTHIYSGGRDRKIYCTDLRNPDMRVLICEEKAPVLRMELDRSADPPQSIWVSTTKSFVNKWSLKAMHNFRASGDYDNDCSAPLTPLCTQPEQVIKGGTSIVQCHILNDKRHILTKDTNNSVAFWDVLKACKGEDLGKVDFDEEVKKRFKMVYVPNWFSVDLKTGMLTITLDESDCFAAWVAAKDAGFTSPDGSDPKLNLGGLLLQALLEFWPRTHINPMEEEENELNHVNGEQESRIQKGNGYFQVPPHTPVIFGEAGGRTLFRLLCRDSGGETESMLLNETVPQWVIDITVDKNMPKFNKIPFYLQPHSSSGAKTLKKDRLSASDMLQVRKVMEHVYEKIINLDTESQATSSSANDKPGEQEKEEDVSVMAEEKIELMCLDQVLDPNMDLRTVKHFIWKSGGDLTIHYRQKST</sequence>
<proteinExistence type="evidence at transcript level"/>
<reference key="1">
    <citation type="journal article" date="2013" name="Nature">
        <title>The zebrafish reference genome sequence and its relationship to the human genome.</title>
        <authorList>
            <person name="Howe K."/>
            <person name="Clark M.D."/>
            <person name="Torroja C.F."/>
            <person name="Torrance J."/>
            <person name="Berthelot C."/>
            <person name="Muffato M."/>
            <person name="Collins J.E."/>
            <person name="Humphray S."/>
            <person name="McLaren K."/>
            <person name="Matthews L."/>
            <person name="McLaren S."/>
            <person name="Sealy I."/>
            <person name="Caccamo M."/>
            <person name="Churcher C."/>
            <person name="Scott C."/>
            <person name="Barrett J.C."/>
            <person name="Koch R."/>
            <person name="Rauch G.J."/>
            <person name="White S."/>
            <person name="Chow W."/>
            <person name="Kilian B."/>
            <person name="Quintais L.T."/>
            <person name="Guerra-Assuncao J.A."/>
            <person name="Zhou Y."/>
            <person name="Gu Y."/>
            <person name="Yen J."/>
            <person name="Vogel J.H."/>
            <person name="Eyre T."/>
            <person name="Redmond S."/>
            <person name="Banerjee R."/>
            <person name="Chi J."/>
            <person name="Fu B."/>
            <person name="Langley E."/>
            <person name="Maguire S.F."/>
            <person name="Laird G.K."/>
            <person name="Lloyd D."/>
            <person name="Kenyon E."/>
            <person name="Donaldson S."/>
            <person name="Sehra H."/>
            <person name="Almeida-King J."/>
            <person name="Loveland J."/>
            <person name="Trevanion S."/>
            <person name="Jones M."/>
            <person name="Quail M."/>
            <person name="Willey D."/>
            <person name="Hunt A."/>
            <person name="Burton J."/>
            <person name="Sims S."/>
            <person name="McLay K."/>
            <person name="Plumb B."/>
            <person name="Davis J."/>
            <person name="Clee C."/>
            <person name="Oliver K."/>
            <person name="Clark R."/>
            <person name="Riddle C."/>
            <person name="Elliot D."/>
            <person name="Threadgold G."/>
            <person name="Harden G."/>
            <person name="Ware D."/>
            <person name="Begum S."/>
            <person name="Mortimore B."/>
            <person name="Kerry G."/>
            <person name="Heath P."/>
            <person name="Phillimore B."/>
            <person name="Tracey A."/>
            <person name="Corby N."/>
            <person name="Dunn M."/>
            <person name="Johnson C."/>
            <person name="Wood J."/>
            <person name="Clark S."/>
            <person name="Pelan S."/>
            <person name="Griffiths G."/>
            <person name="Smith M."/>
            <person name="Glithero R."/>
            <person name="Howden P."/>
            <person name="Barker N."/>
            <person name="Lloyd C."/>
            <person name="Stevens C."/>
            <person name="Harley J."/>
            <person name="Holt K."/>
            <person name="Panagiotidis G."/>
            <person name="Lovell J."/>
            <person name="Beasley H."/>
            <person name="Henderson C."/>
            <person name="Gordon D."/>
            <person name="Auger K."/>
            <person name="Wright D."/>
            <person name="Collins J."/>
            <person name="Raisen C."/>
            <person name="Dyer L."/>
            <person name="Leung K."/>
            <person name="Robertson L."/>
            <person name="Ambridge K."/>
            <person name="Leongamornlert D."/>
            <person name="McGuire S."/>
            <person name="Gilderthorp R."/>
            <person name="Griffiths C."/>
            <person name="Manthravadi D."/>
            <person name="Nichol S."/>
            <person name="Barker G."/>
            <person name="Whitehead S."/>
            <person name="Kay M."/>
            <person name="Brown J."/>
            <person name="Murnane C."/>
            <person name="Gray E."/>
            <person name="Humphries M."/>
            <person name="Sycamore N."/>
            <person name="Barker D."/>
            <person name="Saunders D."/>
            <person name="Wallis J."/>
            <person name="Babbage A."/>
            <person name="Hammond S."/>
            <person name="Mashreghi-Mohammadi M."/>
            <person name="Barr L."/>
            <person name="Martin S."/>
            <person name="Wray P."/>
            <person name="Ellington A."/>
            <person name="Matthews N."/>
            <person name="Ellwood M."/>
            <person name="Woodmansey R."/>
            <person name="Clark G."/>
            <person name="Cooper J."/>
            <person name="Tromans A."/>
            <person name="Grafham D."/>
            <person name="Skuce C."/>
            <person name="Pandian R."/>
            <person name="Andrews R."/>
            <person name="Harrison E."/>
            <person name="Kimberley A."/>
            <person name="Garnett J."/>
            <person name="Fosker N."/>
            <person name="Hall R."/>
            <person name="Garner P."/>
            <person name="Kelly D."/>
            <person name="Bird C."/>
            <person name="Palmer S."/>
            <person name="Gehring I."/>
            <person name="Berger A."/>
            <person name="Dooley C.M."/>
            <person name="Ersan-Urun Z."/>
            <person name="Eser C."/>
            <person name="Geiger H."/>
            <person name="Geisler M."/>
            <person name="Karotki L."/>
            <person name="Kirn A."/>
            <person name="Konantz J."/>
            <person name="Konantz M."/>
            <person name="Oberlander M."/>
            <person name="Rudolph-Geiger S."/>
            <person name="Teucke M."/>
            <person name="Lanz C."/>
            <person name="Raddatz G."/>
            <person name="Osoegawa K."/>
            <person name="Zhu B."/>
            <person name="Rapp A."/>
            <person name="Widaa S."/>
            <person name="Langford C."/>
            <person name="Yang F."/>
            <person name="Schuster S.C."/>
            <person name="Carter N.P."/>
            <person name="Harrow J."/>
            <person name="Ning Z."/>
            <person name="Herrero J."/>
            <person name="Searle S.M."/>
            <person name="Enright A."/>
            <person name="Geisler R."/>
            <person name="Plasterk R.H."/>
            <person name="Lee C."/>
            <person name="Westerfield M."/>
            <person name="de Jong P.J."/>
            <person name="Zon L.I."/>
            <person name="Postlethwait J.H."/>
            <person name="Nusslein-Volhard C."/>
            <person name="Hubbard T.J."/>
            <person name="Roest Crollius H."/>
            <person name="Rogers J."/>
            <person name="Stemple D.L."/>
        </authorList>
    </citation>
    <scope>NUCLEOTIDE SEQUENCE [LARGE SCALE GENOMIC DNA]</scope>
    <source>
        <strain>Tuebingen</strain>
    </source>
</reference>
<reference key="2">
    <citation type="submission" date="2003-09" db="EMBL/GenBank/DDBJ databases">
        <authorList>
            <consortium name="NIH - Zebrafish Gene Collection (ZGC) project"/>
        </authorList>
    </citation>
    <scope>NUCLEOTIDE SEQUENCE [LARGE SCALE MRNA]</scope>
    <source>
        <strain>AB</strain>
        <tissue>Embryo</tissue>
    </source>
</reference>
<gene>
    <name type="primary">wdr48</name>
    <name type="synonym">uaf1</name>
    <name type="ORF">ch211-190k17.1</name>
</gene>
<feature type="chain" id="PRO_0000051404" description="WD repeat-containing protein 48">
    <location>
        <begin position="1"/>
        <end position="677"/>
    </location>
</feature>
<feature type="repeat" description="WD 1">
    <location>
        <begin position="28"/>
        <end position="67"/>
    </location>
</feature>
<feature type="repeat" description="WD 2">
    <location>
        <begin position="73"/>
        <end position="112"/>
    </location>
</feature>
<feature type="repeat" description="WD 3">
    <location>
        <begin position="115"/>
        <end position="154"/>
    </location>
</feature>
<feature type="repeat" description="WD 4">
    <location>
        <begin position="166"/>
        <end position="205"/>
    </location>
</feature>
<feature type="repeat" description="WD 5">
    <location>
        <begin position="208"/>
        <end position="247"/>
    </location>
</feature>
<feature type="repeat" description="WD 6">
    <location>
        <begin position="250"/>
        <end position="289"/>
    </location>
</feature>
<feature type="repeat" description="WD 7">
    <location>
        <begin position="292"/>
        <end position="334"/>
    </location>
</feature>
<feature type="repeat" description="WD 8">
    <location>
        <begin position="358"/>
        <end position="397"/>
    </location>
</feature>
<feature type="region of interest" description="Disordered" evidence="2">
    <location>
        <begin position="611"/>
        <end position="632"/>
    </location>
</feature>
<feature type="sequence conflict" description="In Ref. 2; AAH57489." evidence="3" ref="2">
    <original>A</original>
    <variation>T</variation>
    <location>
        <position position="344"/>
    </location>
</feature>
<feature type="sequence conflict" description="In Ref. 2; AAH57489." evidence="3" ref="2">
    <original>T</original>
    <variation>M</variation>
    <location>
        <position position="609"/>
    </location>
</feature>
<dbReference type="EMBL" id="BX284666">
    <property type="protein sequence ID" value="CAQ15013.1"/>
    <property type="molecule type" value="Genomic_DNA"/>
</dbReference>
<dbReference type="EMBL" id="BC057489">
    <property type="protein sequence ID" value="AAH57489.1"/>
    <property type="molecule type" value="mRNA"/>
</dbReference>
<dbReference type="RefSeq" id="NP_999874.1">
    <property type="nucleotide sequence ID" value="NM_214709.1"/>
</dbReference>
<dbReference type="SMR" id="Q6PFM9"/>
<dbReference type="FunCoup" id="Q6PFM9">
    <property type="interactions" value="3116"/>
</dbReference>
<dbReference type="STRING" id="7955.ENSDARP00000056247"/>
<dbReference type="PaxDb" id="7955-ENSDARP00000056247"/>
<dbReference type="Ensembl" id="ENSDART00000056248">
    <property type="protein sequence ID" value="ENSDARP00000056247"/>
    <property type="gene ID" value="ENSDARG00000038543"/>
</dbReference>
<dbReference type="GeneID" id="334682"/>
<dbReference type="KEGG" id="dre:334682"/>
<dbReference type="AGR" id="ZFIN:ZDB-GENE-030131-6622"/>
<dbReference type="CTD" id="334682"/>
<dbReference type="ZFIN" id="ZDB-GENE-030131-6622">
    <property type="gene designation" value="wdr48b"/>
</dbReference>
<dbReference type="eggNOG" id="KOG0308">
    <property type="taxonomic scope" value="Eukaryota"/>
</dbReference>
<dbReference type="HOGENOM" id="CLU_014960_0_1_1"/>
<dbReference type="InParanoid" id="Q6PFM9"/>
<dbReference type="OMA" id="IRHYHIL"/>
<dbReference type="OrthoDB" id="2421129at2759"/>
<dbReference type="PhylomeDB" id="Q6PFM9"/>
<dbReference type="TreeFam" id="TF315205"/>
<dbReference type="Reactome" id="R-DRE-110314">
    <property type="pathway name" value="Recognition of DNA damage by PCNA-containing replication complex"/>
</dbReference>
<dbReference type="PRO" id="PR:Q6PFM9"/>
<dbReference type="Proteomes" id="UP000000437">
    <property type="component" value="Chromosome 2"/>
</dbReference>
<dbReference type="Bgee" id="ENSDARG00000038543">
    <property type="expression patterns" value="Expressed in early embryo and 26 other cell types or tissues"/>
</dbReference>
<dbReference type="GO" id="GO:0005770">
    <property type="term" value="C:late endosome"/>
    <property type="evidence" value="ECO:0007669"/>
    <property type="project" value="UniProtKB-SubCell"/>
</dbReference>
<dbReference type="GO" id="GO:0005764">
    <property type="term" value="C:lysosome"/>
    <property type="evidence" value="ECO:0007669"/>
    <property type="project" value="UniProtKB-SubCell"/>
</dbReference>
<dbReference type="GO" id="GO:0005634">
    <property type="term" value="C:nucleus"/>
    <property type="evidence" value="ECO:0000250"/>
    <property type="project" value="UniProtKB"/>
</dbReference>
<dbReference type="GO" id="GO:0035800">
    <property type="term" value="F:deubiquitinase activator activity"/>
    <property type="evidence" value="ECO:0000250"/>
    <property type="project" value="UniProtKB"/>
</dbReference>
<dbReference type="GO" id="GO:0003677">
    <property type="term" value="F:DNA binding"/>
    <property type="evidence" value="ECO:0000250"/>
    <property type="project" value="UniProtKB"/>
</dbReference>
<dbReference type="GO" id="GO:0003690">
    <property type="term" value="F:double-stranded DNA binding"/>
    <property type="evidence" value="ECO:0000250"/>
    <property type="project" value="UniProtKB"/>
</dbReference>
<dbReference type="GO" id="GO:0003697">
    <property type="term" value="F:single-stranded DNA binding"/>
    <property type="evidence" value="ECO:0000250"/>
    <property type="project" value="UniProtKB"/>
</dbReference>
<dbReference type="GO" id="GO:0043130">
    <property type="term" value="F:ubiquitin binding"/>
    <property type="evidence" value="ECO:0000318"/>
    <property type="project" value="GO_Central"/>
</dbReference>
<dbReference type="GO" id="GO:0006974">
    <property type="term" value="P:DNA damage response"/>
    <property type="evidence" value="ECO:0000250"/>
    <property type="project" value="UniProtKB"/>
</dbReference>
<dbReference type="GO" id="GO:0000724">
    <property type="term" value="P:double-strand break repair via homologous recombination"/>
    <property type="evidence" value="ECO:0000318"/>
    <property type="project" value="GO_Central"/>
</dbReference>
<dbReference type="GO" id="GO:1905168">
    <property type="term" value="P:positive regulation of double-strand break repair via homologous recombination"/>
    <property type="evidence" value="ECO:0000250"/>
    <property type="project" value="UniProtKB"/>
</dbReference>
<dbReference type="CDD" id="cd17041">
    <property type="entry name" value="Ubl_WDR48"/>
    <property type="match status" value="1"/>
</dbReference>
<dbReference type="CDD" id="cd00200">
    <property type="entry name" value="WD40"/>
    <property type="match status" value="1"/>
</dbReference>
<dbReference type="FunFam" id="2.130.10.10:FF:000054">
    <property type="entry name" value="Putative WD repeat-containing protein 48"/>
    <property type="match status" value="1"/>
</dbReference>
<dbReference type="FunFam" id="2.130.10.10:FF:002031">
    <property type="entry name" value="WD repeat domain 48b"/>
    <property type="match status" value="1"/>
</dbReference>
<dbReference type="Gene3D" id="2.130.10.10">
    <property type="entry name" value="YVTN repeat-like/Quinoprotein amine dehydrogenase"/>
    <property type="match status" value="2"/>
</dbReference>
<dbReference type="InterPro" id="IPR020472">
    <property type="entry name" value="G-protein_beta_WD-40_rep"/>
</dbReference>
<dbReference type="InterPro" id="IPR015943">
    <property type="entry name" value="WD40/YVTN_repeat-like_dom_sf"/>
</dbReference>
<dbReference type="InterPro" id="IPR019775">
    <property type="entry name" value="WD40_repeat_CS"/>
</dbReference>
<dbReference type="InterPro" id="IPR036322">
    <property type="entry name" value="WD40_repeat_dom_sf"/>
</dbReference>
<dbReference type="InterPro" id="IPR001680">
    <property type="entry name" value="WD40_rpt"/>
</dbReference>
<dbReference type="InterPro" id="IPR051246">
    <property type="entry name" value="WDR48"/>
</dbReference>
<dbReference type="InterPro" id="IPR021772">
    <property type="entry name" value="WDR48/Bun107"/>
</dbReference>
<dbReference type="PANTHER" id="PTHR19862">
    <property type="entry name" value="WD REPEAT-CONTAINING PROTEIN 48"/>
    <property type="match status" value="1"/>
</dbReference>
<dbReference type="PANTHER" id="PTHR19862:SF14">
    <property type="entry name" value="WD REPEAT-CONTAINING PROTEIN 48"/>
    <property type="match status" value="1"/>
</dbReference>
<dbReference type="Pfam" id="PF11816">
    <property type="entry name" value="DUF3337"/>
    <property type="match status" value="1"/>
</dbReference>
<dbReference type="Pfam" id="PF00400">
    <property type="entry name" value="WD40"/>
    <property type="match status" value="6"/>
</dbReference>
<dbReference type="PRINTS" id="PR00320">
    <property type="entry name" value="GPROTEINBRPT"/>
</dbReference>
<dbReference type="SMART" id="SM00320">
    <property type="entry name" value="WD40"/>
    <property type="match status" value="7"/>
</dbReference>
<dbReference type="SUPFAM" id="SSF50978">
    <property type="entry name" value="WD40 repeat-like"/>
    <property type="match status" value="1"/>
</dbReference>
<dbReference type="PROSITE" id="PS00678">
    <property type="entry name" value="WD_REPEATS_1"/>
    <property type="match status" value="2"/>
</dbReference>
<dbReference type="PROSITE" id="PS50082">
    <property type="entry name" value="WD_REPEATS_2"/>
    <property type="match status" value="5"/>
</dbReference>
<dbReference type="PROSITE" id="PS50294">
    <property type="entry name" value="WD_REPEATS_REGION"/>
    <property type="match status" value="1"/>
</dbReference>
<organism>
    <name type="scientific">Danio rerio</name>
    <name type="common">Zebrafish</name>
    <name type="synonym">Brachydanio rerio</name>
    <dbReference type="NCBI Taxonomy" id="7955"/>
    <lineage>
        <taxon>Eukaryota</taxon>
        <taxon>Metazoa</taxon>
        <taxon>Chordata</taxon>
        <taxon>Craniata</taxon>
        <taxon>Vertebrata</taxon>
        <taxon>Euteleostomi</taxon>
        <taxon>Actinopterygii</taxon>
        <taxon>Neopterygii</taxon>
        <taxon>Teleostei</taxon>
        <taxon>Ostariophysi</taxon>
        <taxon>Cypriniformes</taxon>
        <taxon>Danionidae</taxon>
        <taxon>Danioninae</taxon>
        <taxon>Danio</taxon>
    </lineage>
</organism>
<comment type="function">
    <text evidence="1">Regulator of deubiquitinating complexes, which acts as a strong activator of usp1, usp12 and usp46. Enhances the usp1-mediated deubiquitination of fancd2; usp1 being almost inactive by itself. Activates deubiquitination by increasing the catalytic turnover without increasing the affinity of deubiquitinating enzymes for the substrate. Also activates deubiquitinating activity of complexes containing usp12. Together with rad51ap1, promotes DNA repair by stimulating rad51-mediated homologous recombination. Binds single-stranded DNA (ssDNA) and double-stranded DNA (dsDNA). DNA-binding is required both for usp1-mediated deubiquitination of fancd2 and stimulation of rad51-mediated homologous recombination: both wdr48/uaf1 and rad51ap1 have coordinated role in DNA-binding during these processes. Together with atad5 and by regulating usp1 activity, has a role in pcna-mediated translesion synthesis (TLS) by deubiquitinating monoubiquitinated pcna. Together with atad5, has a role in recruiting rad51 to stalled forks during replication stress.</text>
</comment>
<comment type="subcellular location">
    <subcellularLocation>
        <location evidence="1">Nucleus</location>
    </subcellularLocation>
    <subcellularLocation>
        <location evidence="1">Cytoplasm</location>
    </subcellularLocation>
    <subcellularLocation>
        <location evidence="1">Lysosome</location>
    </subcellularLocation>
    <subcellularLocation>
        <location evidence="1">Late endosome</location>
    </subcellularLocation>
    <text evidence="1">Mainly in cytoplasmic compartments.</text>
</comment>
<comment type="domain">
    <text evidence="1">The WD repeats are required for the interaction with deubiquitinating enzymes USP1, USP12 and USP46.</text>
</comment>
<comment type="similarity">
    <text evidence="3">Belongs to the WD repeat WDR48 family.</text>
</comment>
<keyword id="KW-0963">Cytoplasm</keyword>
<keyword id="KW-0227">DNA damage</keyword>
<keyword id="KW-0234">DNA repair</keyword>
<keyword id="KW-0238">DNA-binding</keyword>
<keyword id="KW-0967">Endosome</keyword>
<keyword id="KW-0458">Lysosome</keyword>
<keyword id="KW-0539">Nucleus</keyword>
<keyword id="KW-1185">Reference proteome</keyword>
<keyword id="KW-0677">Repeat</keyword>
<keyword id="KW-0833">Ubl conjugation pathway</keyword>
<keyword id="KW-0853">WD repeat</keyword>
<accession>Q6PFM9</accession>
<accession>B0S5N8</accession>
<protein>
    <recommendedName>
        <fullName>WD repeat-containing protein 48</fullName>
    </recommendedName>
    <alternativeName>
        <fullName>USP1-associated factor 1</fullName>
    </alternativeName>
</protein>